<keyword id="KW-0963">Cytoplasm</keyword>
<keyword id="KW-0378">Hydrolase</keyword>
<keyword id="KW-0540">Nuclease</keyword>
<keyword id="KW-0690">Ribosome biogenesis</keyword>
<protein>
    <recommendedName>
        <fullName evidence="1">Putative pre-16S rRNA nuclease</fullName>
        <ecNumber evidence="1">3.1.-.-</ecNumber>
    </recommendedName>
</protein>
<accession>A9WYR6</accession>
<evidence type="ECO:0000255" key="1">
    <source>
        <dbReference type="HAMAP-Rule" id="MF_00651"/>
    </source>
</evidence>
<comment type="function">
    <text evidence="1">Could be a nuclease involved in processing of the 5'-end of pre-16S rRNA.</text>
</comment>
<comment type="subcellular location">
    <subcellularLocation>
        <location evidence="1">Cytoplasm</location>
    </subcellularLocation>
</comment>
<comment type="similarity">
    <text evidence="1">Belongs to the YqgF nuclease family.</text>
</comment>
<dbReference type="EC" id="3.1.-.-" evidence="1"/>
<dbReference type="EMBL" id="CP000912">
    <property type="protein sequence ID" value="ABY39582.1"/>
    <property type="molecule type" value="Genomic_DNA"/>
</dbReference>
<dbReference type="SMR" id="A9WYR6"/>
<dbReference type="KEGG" id="bmt:BSUIS_B0594"/>
<dbReference type="HOGENOM" id="CLU_098240_1_1_5"/>
<dbReference type="Proteomes" id="UP000008545">
    <property type="component" value="Chromosome II"/>
</dbReference>
<dbReference type="GO" id="GO:0005829">
    <property type="term" value="C:cytosol"/>
    <property type="evidence" value="ECO:0007669"/>
    <property type="project" value="TreeGrafter"/>
</dbReference>
<dbReference type="GO" id="GO:0004518">
    <property type="term" value="F:nuclease activity"/>
    <property type="evidence" value="ECO:0007669"/>
    <property type="project" value="UniProtKB-KW"/>
</dbReference>
<dbReference type="GO" id="GO:0000967">
    <property type="term" value="P:rRNA 5'-end processing"/>
    <property type="evidence" value="ECO:0007669"/>
    <property type="project" value="UniProtKB-UniRule"/>
</dbReference>
<dbReference type="CDD" id="cd16964">
    <property type="entry name" value="YqgF"/>
    <property type="match status" value="1"/>
</dbReference>
<dbReference type="Gene3D" id="3.30.420.140">
    <property type="entry name" value="YqgF/RNase H-like domain"/>
    <property type="match status" value="1"/>
</dbReference>
<dbReference type="HAMAP" id="MF_00651">
    <property type="entry name" value="Nuclease_YqgF"/>
    <property type="match status" value="1"/>
</dbReference>
<dbReference type="InterPro" id="IPR012337">
    <property type="entry name" value="RNaseH-like_sf"/>
</dbReference>
<dbReference type="InterPro" id="IPR005227">
    <property type="entry name" value="YqgF"/>
</dbReference>
<dbReference type="InterPro" id="IPR006641">
    <property type="entry name" value="YqgF/RNaseH-like_dom"/>
</dbReference>
<dbReference type="InterPro" id="IPR037027">
    <property type="entry name" value="YqgF/RNaseH-like_dom_sf"/>
</dbReference>
<dbReference type="NCBIfam" id="TIGR00250">
    <property type="entry name" value="RNAse_H_YqgF"/>
    <property type="match status" value="1"/>
</dbReference>
<dbReference type="PANTHER" id="PTHR33317">
    <property type="entry name" value="POLYNUCLEOTIDYL TRANSFERASE, RIBONUCLEASE H-LIKE SUPERFAMILY PROTEIN"/>
    <property type="match status" value="1"/>
</dbReference>
<dbReference type="PANTHER" id="PTHR33317:SF4">
    <property type="entry name" value="POLYNUCLEOTIDYL TRANSFERASE, RIBONUCLEASE H-LIKE SUPERFAMILY PROTEIN"/>
    <property type="match status" value="1"/>
</dbReference>
<dbReference type="Pfam" id="PF03652">
    <property type="entry name" value="RuvX"/>
    <property type="match status" value="1"/>
</dbReference>
<dbReference type="SMART" id="SM00732">
    <property type="entry name" value="YqgFc"/>
    <property type="match status" value="1"/>
</dbReference>
<dbReference type="SUPFAM" id="SSF53098">
    <property type="entry name" value="Ribonuclease H-like"/>
    <property type="match status" value="1"/>
</dbReference>
<sequence length="162" mass="17526">MATAEIEEIPALLKPGQTVAGLDLGTKTIGLAVSDLGLSFAHPRPVIKRVKFTIDAQVLLKALETDKVGVIVIGLPMNMDGTAGPRVQATRAFVRTMQPLTDLPFVFWDERLSTVAAERALIGMDVSRGKRADRIDSAAAAFILQGALDRLHMMRRNDYDAG</sequence>
<feature type="chain" id="PRO_1000082736" description="Putative pre-16S rRNA nuclease">
    <location>
        <begin position="1"/>
        <end position="162"/>
    </location>
</feature>
<name>YQGF_BRUSI</name>
<organism>
    <name type="scientific">Brucella suis (strain ATCC 23445 / NCTC 10510)</name>
    <dbReference type="NCBI Taxonomy" id="470137"/>
    <lineage>
        <taxon>Bacteria</taxon>
        <taxon>Pseudomonadati</taxon>
        <taxon>Pseudomonadota</taxon>
        <taxon>Alphaproteobacteria</taxon>
        <taxon>Hyphomicrobiales</taxon>
        <taxon>Brucellaceae</taxon>
        <taxon>Brucella/Ochrobactrum group</taxon>
        <taxon>Brucella</taxon>
    </lineage>
</organism>
<gene>
    <name type="ordered locus">BSUIS_B0594</name>
</gene>
<reference key="1">
    <citation type="submission" date="2007-12" db="EMBL/GenBank/DDBJ databases">
        <title>Brucella suis ATCC 23445 whole genome shotgun sequencing project.</title>
        <authorList>
            <person name="Setubal J.C."/>
            <person name="Bowns C."/>
            <person name="Boyle S."/>
            <person name="Crasta O.R."/>
            <person name="Czar M.J."/>
            <person name="Dharmanolla C."/>
            <person name="Gillespie J.J."/>
            <person name="Kenyon R.W."/>
            <person name="Lu J."/>
            <person name="Mane S."/>
            <person name="Mohapatra S."/>
            <person name="Nagrani S."/>
            <person name="Purkayastha A."/>
            <person name="Rajasimha H.K."/>
            <person name="Shallom J.M."/>
            <person name="Shallom S."/>
            <person name="Shukla M."/>
            <person name="Snyder E.E."/>
            <person name="Sobral B.W."/>
            <person name="Wattam A.R."/>
            <person name="Will R."/>
            <person name="Williams K."/>
            <person name="Yoo H."/>
            <person name="Bruce D."/>
            <person name="Detter C."/>
            <person name="Munk C."/>
            <person name="Brettin T.S."/>
        </authorList>
    </citation>
    <scope>NUCLEOTIDE SEQUENCE [LARGE SCALE GENOMIC DNA]</scope>
    <source>
        <strain>ATCC 23445 / NCTC 10510</strain>
    </source>
</reference>
<proteinExistence type="inferred from homology"/>